<protein>
    <recommendedName>
        <fullName evidence="1">Fructose-1,6-bisphosphatase class 1</fullName>
        <shortName evidence="1">FBPase class 1</shortName>
        <ecNumber evidence="1">3.1.3.11</ecNumber>
    </recommendedName>
    <alternativeName>
        <fullName evidence="1">D-fructose-1,6-bisphosphate 1-phosphohydrolase class 1</fullName>
    </alternativeName>
</protein>
<comment type="catalytic activity">
    <reaction evidence="1">
        <text>beta-D-fructose 1,6-bisphosphate + H2O = beta-D-fructose 6-phosphate + phosphate</text>
        <dbReference type="Rhea" id="RHEA:11064"/>
        <dbReference type="ChEBI" id="CHEBI:15377"/>
        <dbReference type="ChEBI" id="CHEBI:32966"/>
        <dbReference type="ChEBI" id="CHEBI:43474"/>
        <dbReference type="ChEBI" id="CHEBI:57634"/>
        <dbReference type="EC" id="3.1.3.11"/>
    </reaction>
</comment>
<comment type="cofactor">
    <cofactor evidence="1">
        <name>Mg(2+)</name>
        <dbReference type="ChEBI" id="CHEBI:18420"/>
    </cofactor>
    <text evidence="1">Binds 2 magnesium ions per subunit.</text>
</comment>
<comment type="pathway">
    <text evidence="1">Carbohydrate biosynthesis; gluconeogenesis.</text>
</comment>
<comment type="subunit">
    <text evidence="1">Homotetramer.</text>
</comment>
<comment type="subcellular location">
    <subcellularLocation>
        <location evidence="1">Cytoplasm</location>
    </subcellularLocation>
</comment>
<comment type="similarity">
    <text evidence="1">Belongs to the FBPase class 1 family.</text>
</comment>
<dbReference type="EC" id="3.1.3.11" evidence="1"/>
<dbReference type="EMBL" id="CP000961">
    <property type="protein sequence ID" value="ACA88029.1"/>
    <property type="molecule type" value="Genomic_DNA"/>
</dbReference>
<dbReference type="RefSeq" id="WP_012326361.1">
    <property type="nucleotide sequence ID" value="NC_010506.1"/>
</dbReference>
<dbReference type="SMR" id="B1KEL4"/>
<dbReference type="STRING" id="392500.Swoo_3770"/>
<dbReference type="KEGG" id="swd:Swoo_3770"/>
<dbReference type="eggNOG" id="COG0158">
    <property type="taxonomic scope" value="Bacteria"/>
</dbReference>
<dbReference type="HOGENOM" id="CLU_039977_0_0_6"/>
<dbReference type="UniPathway" id="UPA00138"/>
<dbReference type="Proteomes" id="UP000002168">
    <property type="component" value="Chromosome"/>
</dbReference>
<dbReference type="GO" id="GO:0005829">
    <property type="term" value="C:cytosol"/>
    <property type="evidence" value="ECO:0007669"/>
    <property type="project" value="TreeGrafter"/>
</dbReference>
<dbReference type="GO" id="GO:0042132">
    <property type="term" value="F:fructose 1,6-bisphosphate 1-phosphatase activity"/>
    <property type="evidence" value="ECO:0007669"/>
    <property type="project" value="UniProtKB-UniRule"/>
</dbReference>
<dbReference type="GO" id="GO:0000287">
    <property type="term" value="F:magnesium ion binding"/>
    <property type="evidence" value="ECO:0007669"/>
    <property type="project" value="UniProtKB-UniRule"/>
</dbReference>
<dbReference type="GO" id="GO:0030388">
    <property type="term" value="P:fructose 1,6-bisphosphate metabolic process"/>
    <property type="evidence" value="ECO:0007669"/>
    <property type="project" value="TreeGrafter"/>
</dbReference>
<dbReference type="GO" id="GO:0006002">
    <property type="term" value="P:fructose 6-phosphate metabolic process"/>
    <property type="evidence" value="ECO:0007669"/>
    <property type="project" value="TreeGrafter"/>
</dbReference>
<dbReference type="GO" id="GO:0006000">
    <property type="term" value="P:fructose metabolic process"/>
    <property type="evidence" value="ECO:0007669"/>
    <property type="project" value="TreeGrafter"/>
</dbReference>
<dbReference type="GO" id="GO:0006094">
    <property type="term" value="P:gluconeogenesis"/>
    <property type="evidence" value="ECO:0007669"/>
    <property type="project" value="UniProtKB-UniRule"/>
</dbReference>
<dbReference type="GO" id="GO:0005986">
    <property type="term" value="P:sucrose biosynthetic process"/>
    <property type="evidence" value="ECO:0007669"/>
    <property type="project" value="TreeGrafter"/>
</dbReference>
<dbReference type="CDD" id="cd00354">
    <property type="entry name" value="FBPase"/>
    <property type="match status" value="1"/>
</dbReference>
<dbReference type="FunFam" id="3.30.540.10:FF:000002">
    <property type="entry name" value="Fructose-1,6-bisphosphatase class 1"/>
    <property type="match status" value="1"/>
</dbReference>
<dbReference type="FunFam" id="3.40.190.80:FF:000011">
    <property type="entry name" value="Fructose-1,6-bisphosphatase class 1"/>
    <property type="match status" value="1"/>
</dbReference>
<dbReference type="Gene3D" id="3.40.190.80">
    <property type="match status" value="1"/>
</dbReference>
<dbReference type="Gene3D" id="3.30.540.10">
    <property type="entry name" value="Fructose-1,6-Bisphosphatase, subunit A, domain 1"/>
    <property type="match status" value="1"/>
</dbReference>
<dbReference type="HAMAP" id="MF_01855">
    <property type="entry name" value="FBPase_class1"/>
    <property type="match status" value="1"/>
</dbReference>
<dbReference type="InterPro" id="IPR044015">
    <property type="entry name" value="FBPase_C_dom"/>
</dbReference>
<dbReference type="InterPro" id="IPR000146">
    <property type="entry name" value="FBPase_class-1"/>
</dbReference>
<dbReference type="InterPro" id="IPR033391">
    <property type="entry name" value="FBPase_N"/>
</dbReference>
<dbReference type="InterPro" id="IPR028343">
    <property type="entry name" value="FBPtase"/>
</dbReference>
<dbReference type="NCBIfam" id="NF006779">
    <property type="entry name" value="PRK09293.1-3"/>
    <property type="match status" value="1"/>
</dbReference>
<dbReference type="NCBIfam" id="NF006780">
    <property type="entry name" value="PRK09293.1-4"/>
    <property type="match status" value="1"/>
</dbReference>
<dbReference type="PANTHER" id="PTHR11556">
    <property type="entry name" value="FRUCTOSE-1,6-BISPHOSPHATASE-RELATED"/>
    <property type="match status" value="1"/>
</dbReference>
<dbReference type="PANTHER" id="PTHR11556:SF35">
    <property type="entry name" value="SEDOHEPTULOSE-1,7-BISPHOSPHATASE, CHLOROPLASTIC"/>
    <property type="match status" value="1"/>
</dbReference>
<dbReference type="Pfam" id="PF00316">
    <property type="entry name" value="FBPase"/>
    <property type="match status" value="1"/>
</dbReference>
<dbReference type="Pfam" id="PF18913">
    <property type="entry name" value="FBPase_C"/>
    <property type="match status" value="1"/>
</dbReference>
<dbReference type="PIRSF" id="PIRSF500210">
    <property type="entry name" value="FBPtase"/>
    <property type="match status" value="1"/>
</dbReference>
<dbReference type="PIRSF" id="PIRSF000904">
    <property type="entry name" value="FBPtase_SBPase"/>
    <property type="match status" value="1"/>
</dbReference>
<dbReference type="PRINTS" id="PR00115">
    <property type="entry name" value="F16BPHPHTASE"/>
</dbReference>
<dbReference type="SUPFAM" id="SSF56655">
    <property type="entry name" value="Carbohydrate phosphatase"/>
    <property type="match status" value="1"/>
</dbReference>
<gene>
    <name evidence="1" type="primary">fbp</name>
    <name type="ordered locus">Swoo_3770</name>
</gene>
<reference key="1">
    <citation type="submission" date="2008-02" db="EMBL/GenBank/DDBJ databases">
        <title>Complete sequence of Shewanella woodyi ATCC 51908.</title>
        <authorList>
            <consortium name="US DOE Joint Genome Institute"/>
            <person name="Copeland A."/>
            <person name="Lucas S."/>
            <person name="Lapidus A."/>
            <person name="Glavina del Rio T."/>
            <person name="Dalin E."/>
            <person name="Tice H."/>
            <person name="Bruce D."/>
            <person name="Goodwin L."/>
            <person name="Pitluck S."/>
            <person name="Sims D."/>
            <person name="Brettin T."/>
            <person name="Detter J.C."/>
            <person name="Han C."/>
            <person name="Kuske C.R."/>
            <person name="Schmutz J."/>
            <person name="Larimer F."/>
            <person name="Land M."/>
            <person name="Hauser L."/>
            <person name="Kyrpides N."/>
            <person name="Lykidis A."/>
            <person name="Zhao J.-S."/>
            <person name="Richardson P."/>
        </authorList>
    </citation>
    <scope>NUCLEOTIDE SEQUENCE [LARGE SCALE GENOMIC DNA]</scope>
    <source>
        <strain>ATCC 51908 / MS32</strain>
    </source>
</reference>
<organism>
    <name type="scientific">Shewanella woodyi (strain ATCC 51908 / MS32)</name>
    <dbReference type="NCBI Taxonomy" id="392500"/>
    <lineage>
        <taxon>Bacteria</taxon>
        <taxon>Pseudomonadati</taxon>
        <taxon>Pseudomonadota</taxon>
        <taxon>Gammaproteobacteria</taxon>
        <taxon>Alteromonadales</taxon>
        <taxon>Shewanellaceae</taxon>
        <taxon>Shewanella</taxon>
    </lineage>
</organism>
<keyword id="KW-0119">Carbohydrate metabolism</keyword>
<keyword id="KW-0963">Cytoplasm</keyword>
<keyword id="KW-0378">Hydrolase</keyword>
<keyword id="KW-0460">Magnesium</keyword>
<keyword id="KW-0479">Metal-binding</keyword>
<keyword id="KW-1185">Reference proteome</keyword>
<accession>B1KEL4</accession>
<evidence type="ECO:0000255" key="1">
    <source>
        <dbReference type="HAMAP-Rule" id="MF_01855"/>
    </source>
</evidence>
<name>F16PA_SHEWM</name>
<proteinExistence type="inferred from homology"/>
<sequence>MQTLAQNLTSQGVDASLTQLIHTLANTSKEISHAVRHGALAGVLGATEQENVQGETQKKLDVITNDMLKDALKADNTVRGLASEEEDYIVEVGDKGEYLVCFDPLDGSSNIDINSLVGTIFSVLPAPTGELTESSFLQAGRKQVAAGYVLYGPSTMLALTTGKGVQLFTLNPETNEYLLTTEAMSISKDTGEFAINMSNQRFWEAPMQTYISDLLLGTIGPREKAFNMRWIAAMVGDVHRVLSRGGIFTYPTDNKNPQKPYKLRLMYEANPMSFLVEQAGGIASTGYEAIMDIEPSEIHQRVAVILGSANEVKACLEYHSLDYSEEPAL</sequence>
<feature type="chain" id="PRO_0000364715" description="Fructose-1,6-bisphosphatase class 1">
    <location>
        <begin position="1"/>
        <end position="329"/>
    </location>
</feature>
<feature type="binding site" evidence="1">
    <location>
        <position position="84"/>
    </location>
    <ligand>
        <name>Mg(2+)</name>
        <dbReference type="ChEBI" id="CHEBI:18420"/>
        <label>1</label>
    </ligand>
</feature>
<feature type="binding site" evidence="1">
    <location>
        <position position="103"/>
    </location>
    <ligand>
        <name>Mg(2+)</name>
        <dbReference type="ChEBI" id="CHEBI:18420"/>
        <label>1</label>
    </ligand>
</feature>
<feature type="binding site" evidence="1">
    <location>
        <position position="103"/>
    </location>
    <ligand>
        <name>Mg(2+)</name>
        <dbReference type="ChEBI" id="CHEBI:18420"/>
        <label>2</label>
    </ligand>
</feature>
<feature type="binding site" evidence="1">
    <location>
        <position position="105"/>
    </location>
    <ligand>
        <name>Mg(2+)</name>
        <dbReference type="ChEBI" id="CHEBI:18420"/>
        <label>1</label>
    </ligand>
</feature>
<feature type="binding site" evidence="1">
    <location>
        <begin position="106"/>
        <end position="109"/>
    </location>
    <ligand>
        <name>substrate</name>
    </ligand>
</feature>
<feature type="binding site" evidence="1">
    <location>
        <position position="106"/>
    </location>
    <ligand>
        <name>Mg(2+)</name>
        <dbReference type="ChEBI" id="CHEBI:18420"/>
        <label>2</label>
    </ligand>
</feature>
<feature type="binding site" evidence="1">
    <location>
        <position position="196"/>
    </location>
    <ligand>
        <name>substrate</name>
    </ligand>
</feature>
<feature type="binding site" evidence="1">
    <location>
        <position position="262"/>
    </location>
    <ligand>
        <name>substrate</name>
    </ligand>
</feature>
<feature type="binding site" evidence="1">
    <location>
        <position position="268"/>
    </location>
    <ligand>
        <name>Mg(2+)</name>
        <dbReference type="ChEBI" id="CHEBI:18420"/>
        <label>2</label>
    </ligand>
</feature>